<reference key="1">
    <citation type="journal article" date="2007" name="Virology">
        <title>Genome of the Acidianus bottle-shaped virus and insights into the replication and packaging mechanisms.</title>
        <authorList>
            <person name="Peng X."/>
            <person name="Basta T."/>
            <person name="Haring M."/>
            <person name="Garrett R.A."/>
            <person name="Prangishvili D."/>
        </authorList>
    </citation>
    <scope>NUCLEOTIDE SEQUENCE [GENOMIC DNA]</scope>
</reference>
<evidence type="ECO:0000255" key="1"/>
<evidence type="ECO:0000305" key="2"/>
<organismHost>
    <name type="scientific">Acidianus convivator</name>
    <dbReference type="NCBI Taxonomy" id="269667"/>
</organismHost>
<organism>
    <name type="scientific">Acidianus bottle-shaped virus (isolate Italy/Pozzuoli)</name>
    <name type="common">ABV</name>
    <dbReference type="NCBI Taxonomy" id="654911"/>
    <lineage>
        <taxon>Viruses</taxon>
        <taxon>Viruses incertae sedis</taxon>
        <taxon>Ampullaviridae</taxon>
        <taxon>Bottigliavirus</taxon>
        <taxon>Bottigliavirus ABV</taxon>
    </lineage>
</organism>
<gene>
    <name type="ORF">ORF59</name>
</gene>
<keyword id="KW-1043">Host membrane</keyword>
<keyword id="KW-0472">Membrane</keyword>
<keyword id="KW-1185">Reference proteome</keyword>
<keyword id="KW-0732">Signal</keyword>
<keyword id="KW-0812">Transmembrane</keyword>
<keyword id="KW-1133">Transmembrane helix</keyword>
<dbReference type="EMBL" id="EF432053">
    <property type="protein sequence ID" value="ABP73423.1"/>
    <property type="molecule type" value="Genomic_DNA"/>
</dbReference>
<dbReference type="RefSeq" id="YP_001210337.1">
    <property type="nucleotide sequence ID" value="NC_009452.1"/>
</dbReference>
<dbReference type="GeneID" id="5129841"/>
<dbReference type="KEGG" id="vg:5129841"/>
<dbReference type="Proteomes" id="UP000000513">
    <property type="component" value="Segment"/>
</dbReference>
<dbReference type="GO" id="GO:0033644">
    <property type="term" value="C:host cell membrane"/>
    <property type="evidence" value="ECO:0007669"/>
    <property type="project" value="UniProtKB-SubCell"/>
</dbReference>
<dbReference type="GO" id="GO:0016020">
    <property type="term" value="C:membrane"/>
    <property type="evidence" value="ECO:0007669"/>
    <property type="project" value="UniProtKB-KW"/>
</dbReference>
<sequence length="59" mass="6856">MYLFYVLLSSLFLSALIYVIGKSHPNLFMFISLFVNVVTILYLVFKDYGQYIIAKPINT</sequence>
<proteinExistence type="inferred from homology"/>
<protein>
    <recommendedName>
        <fullName>Uncharacterized protein ORF59</fullName>
    </recommendedName>
</protein>
<comment type="subcellular location">
    <subcellularLocation>
        <location evidence="2">Host membrane</location>
        <topology evidence="2">Single-pass type I membrane protein</topology>
    </subcellularLocation>
</comment>
<feature type="signal peptide" evidence="1">
    <location>
        <begin position="1"/>
        <end position="21"/>
    </location>
</feature>
<feature type="chain" id="PRO_0000384828" description="Uncharacterized protein ORF59">
    <location>
        <begin position="22"/>
        <end position="59"/>
    </location>
</feature>
<feature type="topological domain" description="Extracellular" evidence="1">
    <location>
        <begin position="22"/>
        <end position="24"/>
    </location>
</feature>
<feature type="transmembrane region" description="Helical" evidence="1">
    <location>
        <begin position="25"/>
        <end position="45"/>
    </location>
</feature>
<feature type="topological domain" description="Cytoplasmic" evidence="1">
    <location>
        <begin position="46"/>
        <end position="59"/>
    </location>
</feature>
<name>Y059_ABVP</name>
<accession>A4ZUB9</accession>